<proteinExistence type="evidence at transcript level"/>
<dbReference type="EMBL" id="AY301272">
    <property type="protein sequence ID" value="AAQ81977.1"/>
    <property type="molecule type" value="mRNA"/>
</dbReference>
<dbReference type="EMBL" id="AL807752">
    <property type="status" value="NOT_ANNOTATED_CDS"/>
    <property type="molecule type" value="Genomic_DNA"/>
</dbReference>
<dbReference type="EMBL" id="CH471090">
    <property type="protein sequence ID" value="EAW88317.1"/>
    <property type="molecule type" value="Genomic_DNA"/>
</dbReference>
<dbReference type="CCDS" id="CCDS7018.2"/>
<dbReference type="RefSeq" id="NP_848631.2">
    <property type="nucleotide sequence ID" value="NM_178536.4"/>
</dbReference>
<dbReference type="SMR" id="Q6JVE5"/>
<dbReference type="BioGRID" id="130342">
    <property type="interactions" value="13"/>
</dbReference>
<dbReference type="FunCoup" id="Q6JVE5">
    <property type="interactions" value="135"/>
</dbReference>
<dbReference type="IntAct" id="Q6JVE5">
    <property type="interactions" value="2"/>
</dbReference>
<dbReference type="STRING" id="9606.ENSP00000360696"/>
<dbReference type="BioMuta" id="LCN12"/>
<dbReference type="PaxDb" id="9606-ENSP00000360696"/>
<dbReference type="Antibodypedia" id="18839">
    <property type="antibodies" value="60 antibodies from 13 providers"/>
</dbReference>
<dbReference type="DNASU" id="286256"/>
<dbReference type="Ensembl" id="ENST00000371633.8">
    <property type="protein sequence ID" value="ENSP00000360696.3"/>
    <property type="gene ID" value="ENSG00000184925.12"/>
</dbReference>
<dbReference type="GeneID" id="286256"/>
<dbReference type="KEGG" id="hsa:286256"/>
<dbReference type="MANE-Select" id="ENST00000371633.8">
    <property type="protein sequence ID" value="ENSP00000360696.3"/>
    <property type="RefSeq nucleotide sequence ID" value="NM_178536.4"/>
    <property type="RefSeq protein sequence ID" value="NP_848631.2"/>
</dbReference>
<dbReference type="UCSC" id="uc004ckb.4">
    <property type="organism name" value="human"/>
</dbReference>
<dbReference type="AGR" id="HGNC:28733"/>
<dbReference type="CTD" id="286256"/>
<dbReference type="DisGeNET" id="286256"/>
<dbReference type="GeneCards" id="LCN12"/>
<dbReference type="HGNC" id="HGNC:28733">
    <property type="gene designation" value="LCN12"/>
</dbReference>
<dbReference type="HPA" id="ENSG00000184925">
    <property type="expression patterns" value="Tissue enriched (epididymis)"/>
</dbReference>
<dbReference type="MIM" id="612905">
    <property type="type" value="gene"/>
</dbReference>
<dbReference type="neXtProt" id="NX_Q6JVE5"/>
<dbReference type="OpenTargets" id="ENSG00000184925"/>
<dbReference type="PharmGKB" id="PA134959347"/>
<dbReference type="VEuPathDB" id="HostDB:ENSG00000184925"/>
<dbReference type="eggNOG" id="ENOG502S9R9">
    <property type="taxonomic scope" value="Eukaryota"/>
</dbReference>
<dbReference type="GeneTree" id="ENSGT01050000244868"/>
<dbReference type="HOGENOM" id="CLU_094061_2_1_1"/>
<dbReference type="InParanoid" id="Q6JVE5"/>
<dbReference type="OMA" id="RCDTWSY"/>
<dbReference type="OrthoDB" id="9664333at2759"/>
<dbReference type="PAN-GO" id="Q6JVE5">
    <property type="GO annotations" value="1 GO annotation based on evolutionary models"/>
</dbReference>
<dbReference type="PhylomeDB" id="Q6JVE5"/>
<dbReference type="TreeFam" id="TF336103"/>
<dbReference type="PathwayCommons" id="Q6JVE5"/>
<dbReference type="Reactome" id="R-HSA-804914">
    <property type="pathway name" value="Transport of fatty acids"/>
</dbReference>
<dbReference type="SignaLink" id="Q6JVE5"/>
<dbReference type="BioGRID-ORCS" id="286256">
    <property type="hits" value="24 hits in 1146 CRISPR screens"/>
</dbReference>
<dbReference type="ChiTaRS" id="LCN12">
    <property type="organism name" value="human"/>
</dbReference>
<dbReference type="GenomeRNAi" id="286256"/>
<dbReference type="Pharos" id="Q6JVE5">
    <property type="development level" value="Tdark"/>
</dbReference>
<dbReference type="PRO" id="PR:Q6JVE5"/>
<dbReference type="Proteomes" id="UP000005640">
    <property type="component" value="Chromosome 9"/>
</dbReference>
<dbReference type="RNAct" id="Q6JVE5">
    <property type="molecule type" value="protein"/>
</dbReference>
<dbReference type="Bgee" id="ENSG00000184925">
    <property type="expression patterns" value="Expressed in right uterine tube and 123 other cell types or tissues"/>
</dbReference>
<dbReference type="ExpressionAtlas" id="Q6JVE5">
    <property type="expression patterns" value="baseline and differential"/>
</dbReference>
<dbReference type="GO" id="GO:0005576">
    <property type="term" value="C:extracellular region"/>
    <property type="evidence" value="ECO:0000304"/>
    <property type="project" value="Reactome"/>
</dbReference>
<dbReference type="GO" id="GO:0005615">
    <property type="term" value="C:extracellular space"/>
    <property type="evidence" value="ECO:0000318"/>
    <property type="project" value="GO_Central"/>
</dbReference>
<dbReference type="GO" id="GO:0001972">
    <property type="term" value="F:retinoic acid binding"/>
    <property type="evidence" value="ECO:0000250"/>
    <property type="project" value="UniProtKB"/>
</dbReference>
<dbReference type="CDD" id="cd19458">
    <property type="entry name" value="lipocalin_12"/>
    <property type="match status" value="1"/>
</dbReference>
<dbReference type="FunFam" id="2.40.128.20:FF:000023">
    <property type="entry name" value="Epididymal-specific lipocalin-12"/>
    <property type="match status" value="1"/>
</dbReference>
<dbReference type="Gene3D" id="2.40.128.20">
    <property type="match status" value="1"/>
</dbReference>
<dbReference type="InterPro" id="IPR012674">
    <property type="entry name" value="Calycin"/>
</dbReference>
<dbReference type="InterPro" id="IPR002345">
    <property type="entry name" value="Lipocalin"/>
</dbReference>
<dbReference type="InterPro" id="IPR000566">
    <property type="entry name" value="Lipocln_cytosolic_FA-bd_dom"/>
</dbReference>
<dbReference type="PANTHER" id="PTHR11430:SF12">
    <property type="entry name" value="EPIDIDYMAL-SPECIFIC LIPOCALIN-12"/>
    <property type="match status" value="1"/>
</dbReference>
<dbReference type="PANTHER" id="PTHR11430">
    <property type="entry name" value="LIPOCALIN"/>
    <property type="match status" value="1"/>
</dbReference>
<dbReference type="Pfam" id="PF00061">
    <property type="entry name" value="Lipocalin"/>
    <property type="match status" value="1"/>
</dbReference>
<dbReference type="PRINTS" id="PR01254">
    <property type="entry name" value="PGNDSYNTHASE"/>
</dbReference>
<dbReference type="SUPFAM" id="SSF50814">
    <property type="entry name" value="Lipocalins"/>
    <property type="match status" value="1"/>
</dbReference>
<reference key="1">
    <citation type="journal article" date="2004" name="Gene">
        <title>Molecular evolution of epididymal lipocalin genes localized on mouse chromosome 2.</title>
        <authorList>
            <person name="Suzuki K."/>
            <person name="Lareyre J.-J."/>
            <person name="Sanchez D."/>
            <person name="Gutierrez G."/>
            <person name="Araki Y."/>
            <person name="Matusik R.J."/>
            <person name="Orgebin-Crist M.-C."/>
        </authorList>
    </citation>
    <scope>NUCLEOTIDE SEQUENCE [MRNA]</scope>
</reference>
<reference key="2">
    <citation type="journal article" date="2004" name="Nature">
        <title>DNA sequence and analysis of human chromosome 9.</title>
        <authorList>
            <person name="Humphray S.J."/>
            <person name="Oliver K."/>
            <person name="Hunt A.R."/>
            <person name="Plumb R.W."/>
            <person name="Loveland J.E."/>
            <person name="Howe K.L."/>
            <person name="Andrews T.D."/>
            <person name="Searle S."/>
            <person name="Hunt S.E."/>
            <person name="Scott C.E."/>
            <person name="Jones M.C."/>
            <person name="Ainscough R."/>
            <person name="Almeida J.P."/>
            <person name="Ambrose K.D."/>
            <person name="Ashwell R.I.S."/>
            <person name="Babbage A.K."/>
            <person name="Babbage S."/>
            <person name="Bagguley C.L."/>
            <person name="Bailey J."/>
            <person name="Banerjee R."/>
            <person name="Barker D.J."/>
            <person name="Barlow K.F."/>
            <person name="Bates K."/>
            <person name="Beasley H."/>
            <person name="Beasley O."/>
            <person name="Bird C.P."/>
            <person name="Bray-Allen S."/>
            <person name="Brown A.J."/>
            <person name="Brown J.Y."/>
            <person name="Burford D."/>
            <person name="Burrill W."/>
            <person name="Burton J."/>
            <person name="Carder C."/>
            <person name="Carter N.P."/>
            <person name="Chapman J.C."/>
            <person name="Chen Y."/>
            <person name="Clarke G."/>
            <person name="Clark S.Y."/>
            <person name="Clee C.M."/>
            <person name="Clegg S."/>
            <person name="Collier R.E."/>
            <person name="Corby N."/>
            <person name="Crosier M."/>
            <person name="Cummings A.T."/>
            <person name="Davies J."/>
            <person name="Dhami P."/>
            <person name="Dunn M."/>
            <person name="Dutta I."/>
            <person name="Dyer L.W."/>
            <person name="Earthrowl M.E."/>
            <person name="Faulkner L."/>
            <person name="Fleming C.J."/>
            <person name="Frankish A."/>
            <person name="Frankland J.A."/>
            <person name="French L."/>
            <person name="Fricker D.G."/>
            <person name="Garner P."/>
            <person name="Garnett J."/>
            <person name="Ghori J."/>
            <person name="Gilbert J.G.R."/>
            <person name="Glison C."/>
            <person name="Grafham D.V."/>
            <person name="Gribble S."/>
            <person name="Griffiths C."/>
            <person name="Griffiths-Jones S."/>
            <person name="Grocock R."/>
            <person name="Guy J."/>
            <person name="Hall R.E."/>
            <person name="Hammond S."/>
            <person name="Harley J.L."/>
            <person name="Harrison E.S.I."/>
            <person name="Hart E.A."/>
            <person name="Heath P.D."/>
            <person name="Henderson C.D."/>
            <person name="Hopkins B.L."/>
            <person name="Howard P.J."/>
            <person name="Howden P.J."/>
            <person name="Huckle E."/>
            <person name="Johnson C."/>
            <person name="Johnson D."/>
            <person name="Joy A.A."/>
            <person name="Kay M."/>
            <person name="Keenan S."/>
            <person name="Kershaw J.K."/>
            <person name="Kimberley A.M."/>
            <person name="King A."/>
            <person name="Knights A."/>
            <person name="Laird G.K."/>
            <person name="Langford C."/>
            <person name="Lawlor S."/>
            <person name="Leongamornlert D.A."/>
            <person name="Leversha M."/>
            <person name="Lloyd C."/>
            <person name="Lloyd D.M."/>
            <person name="Lovell J."/>
            <person name="Martin S."/>
            <person name="Mashreghi-Mohammadi M."/>
            <person name="Matthews L."/>
            <person name="McLaren S."/>
            <person name="McLay K.E."/>
            <person name="McMurray A."/>
            <person name="Milne S."/>
            <person name="Nickerson T."/>
            <person name="Nisbett J."/>
            <person name="Nordsiek G."/>
            <person name="Pearce A.V."/>
            <person name="Peck A.I."/>
            <person name="Porter K.M."/>
            <person name="Pandian R."/>
            <person name="Pelan S."/>
            <person name="Phillimore B."/>
            <person name="Povey S."/>
            <person name="Ramsey Y."/>
            <person name="Rand V."/>
            <person name="Scharfe M."/>
            <person name="Sehra H.K."/>
            <person name="Shownkeen R."/>
            <person name="Sims S.K."/>
            <person name="Skuce C.D."/>
            <person name="Smith M."/>
            <person name="Steward C.A."/>
            <person name="Swarbreck D."/>
            <person name="Sycamore N."/>
            <person name="Tester J."/>
            <person name="Thorpe A."/>
            <person name="Tracey A."/>
            <person name="Tromans A."/>
            <person name="Thomas D.W."/>
            <person name="Wall M."/>
            <person name="Wallis J.M."/>
            <person name="West A.P."/>
            <person name="Whitehead S.L."/>
            <person name="Willey D.L."/>
            <person name="Williams S.A."/>
            <person name="Wilming L."/>
            <person name="Wray P.W."/>
            <person name="Young L."/>
            <person name="Ashurst J.L."/>
            <person name="Coulson A."/>
            <person name="Blocker H."/>
            <person name="Durbin R.M."/>
            <person name="Sulston J.E."/>
            <person name="Hubbard T."/>
            <person name="Jackson M.J."/>
            <person name="Bentley D.R."/>
            <person name="Beck S."/>
            <person name="Rogers J."/>
            <person name="Dunham I."/>
        </authorList>
    </citation>
    <scope>NUCLEOTIDE SEQUENCE [LARGE SCALE GENOMIC DNA]</scope>
</reference>
<reference key="3">
    <citation type="submission" date="2005-07" db="EMBL/GenBank/DDBJ databases">
        <authorList>
            <person name="Mural R.J."/>
            <person name="Istrail S."/>
            <person name="Sutton G.G."/>
            <person name="Florea L."/>
            <person name="Halpern A.L."/>
            <person name="Mobarry C.M."/>
            <person name="Lippert R."/>
            <person name="Walenz B."/>
            <person name="Shatkay H."/>
            <person name="Dew I."/>
            <person name="Miller J.R."/>
            <person name="Flanigan M.J."/>
            <person name="Edwards N.J."/>
            <person name="Bolanos R."/>
            <person name="Fasulo D."/>
            <person name="Halldorsson B.V."/>
            <person name="Hannenhalli S."/>
            <person name="Turner R."/>
            <person name="Yooseph S."/>
            <person name="Lu F."/>
            <person name="Nusskern D.R."/>
            <person name="Shue B.C."/>
            <person name="Zheng X.H."/>
            <person name="Zhong F."/>
            <person name="Delcher A.L."/>
            <person name="Huson D.H."/>
            <person name="Kravitz S.A."/>
            <person name="Mouchard L."/>
            <person name="Reinert K."/>
            <person name="Remington K.A."/>
            <person name="Clark A.G."/>
            <person name="Waterman M.S."/>
            <person name="Eichler E.E."/>
            <person name="Adams M.D."/>
            <person name="Hunkapiller M.W."/>
            <person name="Myers E.W."/>
            <person name="Venter J.C."/>
        </authorList>
    </citation>
    <scope>NUCLEOTIDE SEQUENCE [LARGE SCALE GENOMIC DNA]</scope>
</reference>
<feature type="signal peptide" evidence="2">
    <location>
        <begin position="1"/>
        <end position="19"/>
    </location>
</feature>
<feature type="chain" id="PRO_0000017922" description="Epididymal-specific lipocalin-12">
    <location>
        <begin position="20"/>
        <end position="192"/>
    </location>
</feature>
<feature type="disulfide bond" evidence="1">
    <location>
        <begin position="88"/>
        <end position="192"/>
    </location>
</feature>
<protein>
    <recommendedName>
        <fullName>Epididymal-specific lipocalin-12</fullName>
    </recommendedName>
</protein>
<evidence type="ECO:0000250" key="1"/>
<evidence type="ECO:0000255" key="2"/>
<evidence type="ECO:0000305" key="3"/>
<sequence>MRLLCGLWLWLSLLKVLQAQTPTPLPLPPPMQSFQGNQFQGEWFVLGLAGNSFRPEHRALLNAFTATFELSDDGRFEVWNAMTRGQHCDTWSYVLIPAAQPGQFTVDHGVEPGADREETRVVDSDYTQFALMLSRRHTSRLAVLRISLLGRSWLLPPGTLDQFICLGRAQGLSDDNIVFPDVTGWSPQASVC</sequence>
<comment type="function">
    <text evidence="1">Binds all-trans retinoic acid and may act as a retinoid carrier protein within the epididymis. May play a role in male fertility (By similarity).</text>
</comment>
<comment type="subunit">
    <text evidence="1">Monomer.</text>
</comment>
<comment type="subcellular location">
    <subcellularLocation>
        <location evidence="3">Secreted</location>
    </subcellularLocation>
</comment>
<comment type="similarity">
    <text evidence="3">Belongs to the calycin superfamily. Lipocalin family.</text>
</comment>
<name>LCN12_HUMAN</name>
<accession>Q6JVE5</accession>
<accession>A2AMJ7</accession>
<gene>
    <name type="primary">LCN12</name>
</gene>
<keyword id="KW-1015">Disulfide bond</keyword>
<keyword id="KW-1185">Reference proteome</keyword>
<keyword id="KW-0964">Secreted</keyword>
<keyword id="KW-0732">Signal</keyword>
<keyword id="KW-0813">Transport</keyword>
<organism>
    <name type="scientific">Homo sapiens</name>
    <name type="common">Human</name>
    <dbReference type="NCBI Taxonomy" id="9606"/>
    <lineage>
        <taxon>Eukaryota</taxon>
        <taxon>Metazoa</taxon>
        <taxon>Chordata</taxon>
        <taxon>Craniata</taxon>
        <taxon>Vertebrata</taxon>
        <taxon>Euteleostomi</taxon>
        <taxon>Mammalia</taxon>
        <taxon>Eutheria</taxon>
        <taxon>Euarchontoglires</taxon>
        <taxon>Primates</taxon>
        <taxon>Haplorrhini</taxon>
        <taxon>Catarrhini</taxon>
        <taxon>Hominidae</taxon>
        <taxon>Homo</taxon>
    </lineage>
</organism>